<feature type="peptide" id="PRO_0000043441" description="Hypertrehalosaemic factor">
    <location>
        <begin position="1"/>
        <end position="8"/>
    </location>
</feature>
<feature type="modified residue" description="Pyrrolidone carboxylic acid" evidence="1">
    <location>
        <position position="1"/>
    </location>
</feature>
<feature type="modified residue" description="Tryptophan amide" evidence="1">
    <location>
        <position position="8"/>
    </location>
</feature>
<evidence type="ECO:0000269" key="1">
    <source>
    </source>
</evidence>
<evidence type="ECO:0000305" key="2"/>
<name>HTF_TENMO</name>
<proteinExistence type="evidence at protein level"/>
<comment type="function">
    <text>Hypertrehalosaemic factors are neuropeptides that elevate the level of trehalose in the hemolymph (trehalose is the major carbohydrate in the hemolymph of insects).</text>
</comment>
<comment type="subcellular location">
    <subcellularLocation>
        <location>Secreted</location>
    </subcellularLocation>
</comment>
<comment type="similarity">
    <text evidence="2">Belongs to the AKH/HRTH/RPCH family.</text>
</comment>
<protein>
    <recommendedName>
        <fullName>Hypertrehalosaemic factor</fullName>
    </recommendedName>
    <alternativeName>
        <fullName>HOTH</fullName>
    </alternativeName>
    <alternativeName>
        <fullName>Hypertrehalosaemic neuropeptide</fullName>
    </alternativeName>
</protein>
<accession>P67789</accession>
<accession>P25419</accession>
<dbReference type="PIR" id="A43976">
    <property type="entry name" value="A43976"/>
</dbReference>
<dbReference type="GO" id="GO:0005576">
    <property type="term" value="C:extracellular region"/>
    <property type="evidence" value="ECO:0007669"/>
    <property type="project" value="UniProtKB-SubCell"/>
</dbReference>
<dbReference type="GO" id="GO:0005179">
    <property type="term" value="F:hormone activity"/>
    <property type="evidence" value="ECO:0007669"/>
    <property type="project" value="UniProtKB-KW"/>
</dbReference>
<dbReference type="GO" id="GO:0007218">
    <property type="term" value="P:neuropeptide signaling pathway"/>
    <property type="evidence" value="ECO:0007669"/>
    <property type="project" value="UniProtKB-KW"/>
</dbReference>
<dbReference type="InterPro" id="IPR002047">
    <property type="entry name" value="Adipokinetic_hormone_CS"/>
</dbReference>
<dbReference type="PROSITE" id="PS00256">
    <property type="entry name" value="AKH"/>
    <property type="match status" value="1"/>
</dbReference>
<reference key="1">
    <citation type="journal article" date="1990" name="Peptides">
        <title>The primary structure of the hypertrehalosemic neuropeptide from tenebrionid beetles: a novel member of the AKH/RPCH family.</title>
        <authorList>
            <person name="Gaede G."/>
            <person name="Rosinski G."/>
        </authorList>
    </citation>
    <scope>PROTEIN SEQUENCE</scope>
    <scope>PYROGLUTAMATE FORMATION AT GLN-1</scope>
    <scope>AMIDATION AT TRP-8</scope>
    <source>
        <tissue>Corpora cardiaca</tissue>
    </source>
</reference>
<keyword id="KW-0027">Amidation</keyword>
<keyword id="KW-0903">Direct protein sequencing</keyword>
<keyword id="KW-0372">Hormone</keyword>
<keyword id="KW-0527">Neuropeptide</keyword>
<keyword id="KW-0873">Pyrrolidone carboxylic acid</keyword>
<keyword id="KW-0964">Secreted</keyword>
<sequence length="8" mass="1005">QLNFSPNW</sequence>
<organism>
    <name type="scientific">Tenebrio molitor</name>
    <name type="common">Yellow mealworm beetle</name>
    <dbReference type="NCBI Taxonomy" id="7067"/>
    <lineage>
        <taxon>Eukaryota</taxon>
        <taxon>Metazoa</taxon>
        <taxon>Ecdysozoa</taxon>
        <taxon>Arthropoda</taxon>
        <taxon>Hexapoda</taxon>
        <taxon>Insecta</taxon>
        <taxon>Pterygota</taxon>
        <taxon>Neoptera</taxon>
        <taxon>Endopterygota</taxon>
        <taxon>Coleoptera</taxon>
        <taxon>Polyphaga</taxon>
        <taxon>Cucujiformia</taxon>
        <taxon>Tenebrionidae</taxon>
        <taxon>Tenebrio</taxon>
    </lineage>
</organism>